<keyword id="KW-0687">Ribonucleoprotein</keyword>
<keyword id="KW-0689">Ribosomal protein</keyword>
<keyword id="KW-0694">RNA-binding</keyword>
<keyword id="KW-0699">rRNA-binding</keyword>
<feature type="chain" id="PRO_1000068171" description="Large ribosomal subunit protein uL23">
    <location>
        <begin position="1"/>
        <end position="98"/>
    </location>
</feature>
<protein>
    <recommendedName>
        <fullName evidence="1">Large ribosomal subunit protein uL23</fullName>
    </recommendedName>
    <alternativeName>
        <fullName evidence="2">50S ribosomal protein L23</fullName>
    </alternativeName>
</protein>
<evidence type="ECO:0000255" key="1">
    <source>
        <dbReference type="HAMAP-Rule" id="MF_01369"/>
    </source>
</evidence>
<evidence type="ECO:0000305" key="2"/>
<sequence>MNLYDVIKKPVITEKSMIALEAGKYTFEVDTRAHKLLIKQAVEAAFDGVKVASVNTVNVKPKAKRVGRYTGFTSKTKKAIITLTADSKAIELFAAEAE</sequence>
<organism>
    <name type="scientific">Streptococcus pyogenes serotype M28 (strain MGAS6180)</name>
    <dbReference type="NCBI Taxonomy" id="319701"/>
    <lineage>
        <taxon>Bacteria</taxon>
        <taxon>Bacillati</taxon>
        <taxon>Bacillota</taxon>
        <taxon>Bacilli</taxon>
        <taxon>Lactobacillales</taxon>
        <taxon>Streptococcaceae</taxon>
        <taxon>Streptococcus</taxon>
    </lineage>
</organism>
<accession>Q48VU7</accession>
<dbReference type="EMBL" id="CP000056">
    <property type="protein sequence ID" value="AAX71159.1"/>
    <property type="molecule type" value="Genomic_DNA"/>
</dbReference>
<dbReference type="RefSeq" id="WP_002986656.1">
    <property type="nucleotide sequence ID" value="NC_007296.2"/>
</dbReference>
<dbReference type="SMR" id="Q48VU7"/>
<dbReference type="KEGG" id="spb:M28_Spy0045"/>
<dbReference type="HOGENOM" id="CLU_037562_3_2_9"/>
<dbReference type="GO" id="GO:1990904">
    <property type="term" value="C:ribonucleoprotein complex"/>
    <property type="evidence" value="ECO:0007669"/>
    <property type="project" value="UniProtKB-KW"/>
</dbReference>
<dbReference type="GO" id="GO:0005840">
    <property type="term" value="C:ribosome"/>
    <property type="evidence" value="ECO:0007669"/>
    <property type="project" value="UniProtKB-KW"/>
</dbReference>
<dbReference type="GO" id="GO:0019843">
    <property type="term" value="F:rRNA binding"/>
    <property type="evidence" value="ECO:0007669"/>
    <property type="project" value="UniProtKB-UniRule"/>
</dbReference>
<dbReference type="GO" id="GO:0003735">
    <property type="term" value="F:structural constituent of ribosome"/>
    <property type="evidence" value="ECO:0007669"/>
    <property type="project" value="InterPro"/>
</dbReference>
<dbReference type="GO" id="GO:0006412">
    <property type="term" value="P:translation"/>
    <property type="evidence" value="ECO:0007669"/>
    <property type="project" value="UniProtKB-UniRule"/>
</dbReference>
<dbReference type="FunFam" id="3.30.70.330:FF:000001">
    <property type="entry name" value="50S ribosomal protein L23"/>
    <property type="match status" value="1"/>
</dbReference>
<dbReference type="Gene3D" id="3.30.70.330">
    <property type="match status" value="1"/>
</dbReference>
<dbReference type="HAMAP" id="MF_01369_B">
    <property type="entry name" value="Ribosomal_uL23_B"/>
    <property type="match status" value="1"/>
</dbReference>
<dbReference type="InterPro" id="IPR012677">
    <property type="entry name" value="Nucleotide-bd_a/b_plait_sf"/>
</dbReference>
<dbReference type="InterPro" id="IPR013025">
    <property type="entry name" value="Ribosomal_uL23-like"/>
</dbReference>
<dbReference type="InterPro" id="IPR012678">
    <property type="entry name" value="Ribosomal_uL23/eL15/eS24_sf"/>
</dbReference>
<dbReference type="InterPro" id="IPR001014">
    <property type="entry name" value="Ribosomal_uL23_CS"/>
</dbReference>
<dbReference type="NCBIfam" id="NF004361">
    <property type="entry name" value="PRK05738.2-1"/>
    <property type="match status" value="1"/>
</dbReference>
<dbReference type="NCBIfam" id="NF004363">
    <property type="entry name" value="PRK05738.2-4"/>
    <property type="match status" value="1"/>
</dbReference>
<dbReference type="PANTHER" id="PTHR11620">
    <property type="entry name" value="60S RIBOSOMAL PROTEIN L23A"/>
    <property type="match status" value="1"/>
</dbReference>
<dbReference type="Pfam" id="PF00276">
    <property type="entry name" value="Ribosomal_L23"/>
    <property type="match status" value="1"/>
</dbReference>
<dbReference type="SUPFAM" id="SSF54189">
    <property type="entry name" value="Ribosomal proteins S24e, L23 and L15e"/>
    <property type="match status" value="1"/>
</dbReference>
<dbReference type="PROSITE" id="PS00050">
    <property type="entry name" value="RIBOSOMAL_L23"/>
    <property type="match status" value="1"/>
</dbReference>
<name>RL23_STRPM</name>
<proteinExistence type="inferred from homology"/>
<reference key="1">
    <citation type="journal article" date="2005" name="J. Infect. Dis.">
        <title>Genome sequence of a serotype M28 strain of group A Streptococcus: potential new insights into puerperal sepsis and bacterial disease specificity.</title>
        <authorList>
            <person name="Green N.M."/>
            <person name="Zhang S."/>
            <person name="Porcella S.F."/>
            <person name="Nagiec M.J."/>
            <person name="Barbian K.D."/>
            <person name="Beres S.B."/>
            <person name="Lefebvre R.B."/>
            <person name="Musser J.M."/>
        </authorList>
    </citation>
    <scope>NUCLEOTIDE SEQUENCE [LARGE SCALE GENOMIC DNA]</scope>
    <source>
        <strain>MGAS6180</strain>
    </source>
</reference>
<comment type="function">
    <text evidence="1">One of the early assembly proteins it binds 23S rRNA. One of the proteins that surrounds the polypeptide exit tunnel on the outside of the ribosome. Forms the main docking site for trigger factor binding to the ribosome.</text>
</comment>
<comment type="subunit">
    <text evidence="1">Part of the 50S ribosomal subunit. Contacts protein L29, and trigger factor when it is bound to the ribosome.</text>
</comment>
<comment type="similarity">
    <text evidence="1">Belongs to the universal ribosomal protein uL23 family.</text>
</comment>
<gene>
    <name evidence="1" type="primary">rplW</name>
    <name type="ordered locus">M28_Spy0045</name>
</gene>